<organism>
    <name type="scientific">Lactobacillus helveticus (strain DPC 4571)</name>
    <dbReference type="NCBI Taxonomy" id="405566"/>
    <lineage>
        <taxon>Bacteria</taxon>
        <taxon>Bacillati</taxon>
        <taxon>Bacillota</taxon>
        <taxon>Bacilli</taxon>
        <taxon>Lactobacillales</taxon>
        <taxon>Lactobacillaceae</taxon>
        <taxon>Lactobacillus</taxon>
    </lineage>
</organism>
<gene>
    <name evidence="1" type="primary">atpD</name>
    <name type="ordered locus">lhv_0812</name>
</gene>
<protein>
    <recommendedName>
        <fullName evidence="1">ATP synthase subunit beta</fullName>
        <ecNumber evidence="1">7.1.2.2</ecNumber>
    </recommendedName>
    <alternativeName>
        <fullName evidence="1">ATP synthase F1 sector subunit beta</fullName>
    </alternativeName>
    <alternativeName>
        <fullName evidence="1">F-ATPase subunit beta</fullName>
    </alternativeName>
</protein>
<accession>A8YUK1</accession>
<sequence>MSEGEIVQVIGPVIDVKFPIDKNLPNINNALRVIKSENESIVLEVTVELGDGVLRTIAMESTDGLRRGMKVEDTGGPISVPVGEDTLGRVFNVLGQPIDGGPAFSKDHPRESIHKEAPKYEDLTTSREILETGIKVIDLLEPYVRGGKVGLFGGAGVGKTTIIQELIHNIAQEHGGISVFTGVGERTREGNDLYFEMKASGVLSKTAMVFGQMNEPPGARMRVALTGLTLAEYFRDVEGQDVLLFIDNIFRFTQAGSEVSALLGRMPSAVGYQPTLATEMGQLQERITSTKKGSITSIQAVYVPADDYTDPAPSTTFAHLDATTNLERSLVEQGIYPAVDPLESSSSALDPEVVGKEHYEVATRVQHVLQRYHELQDIISVLGMDELSDEEKLIVARARKVQFFLSQNFFVAEQFTGVPGSYVPIKETIKGFKLILDGHLDDLPEDSFRGVGPIEDVLKKAQEMGVTPSDPEAKALLEK</sequence>
<dbReference type="EC" id="7.1.2.2" evidence="1"/>
<dbReference type="EMBL" id="CP000517">
    <property type="protein sequence ID" value="ABX26939.1"/>
    <property type="molecule type" value="Genomic_DNA"/>
</dbReference>
<dbReference type="RefSeq" id="WP_003628021.1">
    <property type="nucleotide sequence ID" value="NC_010080.1"/>
</dbReference>
<dbReference type="SMR" id="A8YUK1"/>
<dbReference type="KEGG" id="lhe:lhv_0812"/>
<dbReference type="eggNOG" id="COG0055">
    <property type="taxonomic scope" value="Bacteria"/>
</dbReference>
<dbReference type="HOGENOM" id="CLU_022398_0_2_9"/>
<dbReference type="Proteomes" id="UP000000790">
    <property type="component" value="Chromosome"/>
</dbReference>
<dbReference type="GO" id="GO:0005886">
    <property type="term" value="C:plasma membrane"/>
    <property type="evidence" value="ECO:0007669"/>
    <property type="project" value="UniProtKB-SubCell"/>
</dbReference>
<dbReference type="GO" id="GO:0045259">
    <property type="term" value="C:proton-transporting ATP synthase complex"/>
    <property type="evidence" value="ECO:0007669"/>
    <property type="project" value="UniProtKB-KW"/>
</dbReference>
<dbReference type="GO" id="GO:0005524">
    <property type="term" value="F:ATP binding"/>
    <property type="evidence" value="ECO:0007669"/>
    <property type="project" value="UniProtKB-UniRule"/>
</dbReference>
<dbReference type="GO" id="GO:0016887">
    <property type="term" value="F:ATP hydrolysis activity"/>
    <property type="evidence" value="ECO:0007669"/>
    <property type="project" value="InterPro"/>
</dbReference>
<dbReference type="GO" id="GO:0046933">
    <property type="term" value="F:proton-transporting ATP synthase activity, rotational mechanism"/>
    <property type="evidence" value="ECO:0007669"/>
    <property type="project" value="UniProtKB-UniRule"/>
</dbReference>
<dbReference type="CDD" id="cd18110">
    <property type="entry name" value="ATP-synt_F1_beta_C"/>
    <property type="match status" value="1"/>
</dbReference>
<dbReference type="CDD" id="cd18115">
    <property type="entry name" value="ATP-synt_F1_beta_N"/>
    <property type="match status" value="1"/>
</dbReference>
<dbReference type="CDD" id="cd01133">
    <property type="entry name" value="F1-ATPase_beta_CD"/>
    <property type="match status" value="1"/>
</dbReference>
<dbReference type="FunFam" id="1.10.1140.10:FF:000001">
    <property type="entry name" value="ATP synthase subunit beta"/>
    <property type="match status" value="1"/>
</dbReference>
<dbReference type="FunFam" id="3.40.50.300:FF:000004">
    <property type="entry name" value="ATP synthase subunit beta"/>
    <property type="match status" value="1"/>
</dbReference>
<dbReference type="Gene3D" id="2.40.10.170">
    <property type="match status" value="1"/>
</dbReference>
<dbReference type="Gene3D" id="1.10.1140.10">
    <property type="entry name" value="Bovine Mitochondrial F1-atpase, Atp Synthase Beta Chain, Chain D, domain 3"/>
    <property type="match status" value="1"/>
</dbReference>
<dbReference type="Gene3D" id="3.40.50.300">
    <property type="entry name" value="P-loop containing nucleotide triphosphate hydrolases"/>
    <property type="match status" value="1"/>
</dbReference>
<dbReference type="HAMAP" id="MF_01347">
    <property type="entry name" value="ATP_synth_beta_bact"/>
    <property type="match status" value="1"/>
</dbReference>
<dbReference type="InterPro" id="IPR003593">
    <property type="entry name" value="AAA+_ATPase"/>
</dbReference>
<dbReference type="InterPro" id="IPR055190">
    <property type="entry name" value="ATP-synt_VA_C"/>
</dbReference>
<dbReference type="InterPro" id="IPR005722">
    <property type="entry name" value="ATP_synth_F1_bsu"/>
</dbReference>
<dbReference type="InterPro" id="IPR020003">
    <property type="entry name" value="ATPase_a/bsu_AS"/>
</dbReference>
<dbReference type="InterPro" id="IPR050053">
    <property type="entry name" value="ATPase_alpha/beta_chains"/>
</dbReference>
<dbReference type="InterPro" id="IPR004100">
    <property type="entry name" value="ATPase_F1/V1/A1_a/bsu_N"/>
</dbReference>
<dbReference type="InterPro" id="IPR036121">
    <property type="entry name" value="ATPase_F1/V1/A1_a/bsu_N_sf"/>
</dbReference>
<dbReference type="InterPro" id="IPR000194">
    <property type="entry name" value="ATPase_F1/V1/A1_a/bsu_nucl-bd"/>
</dbReference>
<dbReference type="InterPro" id="IPR024034">
    <property type="entry name" value="ATPase_F1/V1_b/a_C"/>
</dbReference>
<dbReference type="InterPro" id="IPR027417">
    <property type="entry name" value="P-loop_NTPase"/>
</dbReference>
<dbReference type="NCBIfam" id="TIGR01039">
    <property type="entry name" value="atpD"/>
    <property type="match status" value="1"/>
</dbReference>
<dbReference type="PANTHER" id="PTHR15184">
    <property type="entry name" value="ATP SYNTHASE"/>
    <property type="match status" value="1"/>
</dbReference>
<dbReference type="PANTHER" id="PTHR15184:SF71">
    <property type="entry name" value="ATP SYNTHASE SUBUNIT BETA, MITOCHONDRIAL"/>
    <property type="match status" value="1"/>
</dbReference>
<dbReference type="Pfam" id="PF00006">
    <property type="entry name" value="ATP-synt_ab"/>
    <property type="match status" value="1"/>
</dbReference>
<dbReference type="Pfam" id="PF02874">
    <property type="entry name" value="ATP-synt_ab_N"/>
    <property type="match status" value="1"/>
</dbReference>
<dbReference type="Pfam" id="PF22919">
    <property type="entry name" value="ATP-synt_VA_C"/>
    <property type="match status" value="1"/>
</dbReference>
<dbReference type="SMART" id="SM00382">
    <property type="entry name" value="AAA"/>
    <property type="match status" value="1"/>
</dbReference>
<dbReference type="SUPFAM" id="SSF47917">
    <property type="entry name" value="C-terminal domain of alpha and beta subunits of F1 ATP synthase"/>
    <property type="match status" value="1"/>
</dbReference>
<dbReference type="SUPFAM" id="SSF50615">
    <property type="entry name" value="N-terminal domain of alpha and beta subunits of F1 ATP synthase"/>
    <property type="match status" value="1"/>
</dbReference>
<dbReference type="SUPFAM" id="SSF52540">
    <property type="entry name" value="P-loop containing nucleoside triphosphate hydrolases"/>
    <property type="match status" value="1"/>
</dbReference>
<dbReference type="PROSITE" id="PS00152">
    <property type="entry name" value="ATPASE_ALPHA_BETA"/>
    <property type="match status" value="1"/>
</dbReference>
<name>ATPB_LACH4</name>
<evidence type="ECO:0000255" key="1">
    <source>
        <dbReference type="HAMAP-Rule" id="MF_01347"/>
    </source>
</evidence>
<reference key="1">
    <citation type="journal article" date="2008" name="J. Bacteriol.">
        <title>Genome sequence of Lactobacillus helveticus: an organism distinguished by selective gene loss and IS element expansion.</title>
        <authorList>
            <person name="Callanan M."/>
            <person name="Kaleta P."/>
            <person name="O'Callaghan J."/>
            <person name="O'Sullivan O."/>
            <person name="Jordan K."/>
            <person name="McAuliffe O."/>
            <person name="Sangrador-Vegas A."/>
            <person name="Slattery L."/>
            <person name="Fitzgerald G.F."/>
            <person name="Beresford T."/>
            <person name="Ross R.P."/>
        </authorList>
    </citation>
    <scope>NUCLEOTIDE SEQUENCE [LARGE SCALE GENOMIC DNA]</scope>
    <source>
        <strain>DPC 4571</strain>
    </source>
</reference>
<keyword id="KW-0066">ATP synthesis</keyword>
<keyword id="KW-0067">ATP-binding</keyword>
<keyword id="KW-1003">Cell membrane</keyword>
<keyword id="KW-0139">CF(1)</keyword>
<keyword id="KW-0375">Hydrogen ion transport</keyword>
<keyword id="KW-0406">Ion transport</keyword>
<keyword id="KW-0472">Membrane</keyword>
<keyword id="KW-0547">Nucleotide-binding</keyword>
<keyword id="KW-1278">Translocase</keyword>
<keyword id="KW-0813">Transport</keyword>
<feature type="chain" id="PRO_1000073367" description="ATP synthase subunit beta">
    <location>
        <begin position="1"/>
        <end position="479"/>
    </location>
</feature>
<feature type="binding site" evidence="1">
    <location>
        <begin position="153"/>
        <end position="160"/>
    </location>
    <ligand>
        <name>ATP</name>
        <dbReference type="ChEBI" id="CHEBI:30616"/>
    </ligand>
</feature>
<comment type="function">
    <text evidence="1">Produces ATP from ADP in the presence of a proton gradient across the membrane. The catalytic sites are hosted primarily by the beta subunits.</text>
</comment>
<comment type="catalytic activity">
    <reaction evidence="1">
        <text>ATP + H2O + 4 H(+)(in) = ADP + phosphate + 5 H(+)(out)</text>
        <dbReference type="Rhea" id="RHEA:57720"/>
        <dbReference type="ChEBI" id="CHEBI:15377"/>
        <dbReference type="ChEBI" id="CHEBI:15378"/>
        <dbReference type="ChEBI" id="CHEBI:30616"/>
        <dbReference type="ChEBI" id="CHEBI:43474"/>
        <dbReference type="ChEBI" id="CHEBI:456216"/>
        <dbReference type="EC" id="7.1.2.2"/>
    </reaction>
</comment>
<comment type="subunit">
    <text evidence="1">F-type ATPases have 2 components, CF(1) - the catalytic core - and CF(0) - the membrane proton channel. CF(1) has five subunits: alpha(3), beta(3), gamma(1), delta(1), epsilon(1). CF(0) has three main subunits: a(1), b(2) and c(9-12). The alpha and beta chains form an alternating ring which encloses part of the gamma chain. CF(1) is attached to CF(0) by a central stalk formed by the gamma and epsilon chains, while a peripheral stalk is formed by the delta and b chains.</text>
</comment>
<comment type="subcellular location">
    <subcellularLocation>
        <location evidence="1">Cell membrane</location>
        <topology evidence="1">Peripheral membrane protein</topology>
    </subcellularLocation>
</comment>
<comment type="similarity">
    <text evidence="1">Belongs to the ATPase alpha/beta chains family.</text>
</comment>
<proteinExistence type="inferred from homology"/>